<reference key="1">
    <citation type="journal article" date="2006" name="Proc. Natl. Acad. Sci. U.S.A.">
        <title>Molecular genetic anatomy of inter- and intraserotype variation in the human bacterial pathogen group A Streptococcus.</title>
        <authorList>
            <person name="Beres S.B."/>
            <person name="Richter E.W."/>
            <person name="Nagiec M.J."/>
            <person name="Sumby P."/>
            <person name="Porcella S.F."/>
            <person name="DeLeo F.R."/>
            <person name="Musser J.M."/>
        </authorList>
    </citation>
    <scope>NUCLEOTIDE SEQUENCE [LARGE SCALE GENOMIC DNA]</scope>
    <source>
        <strain>MGAS9429</strain>
    </source>
</reference>
<proteinExistence type="inferred from homology"/>
<comment type="function">
    <text evidence="1">Peptide chain release factor 1 directs the termination of translation in response to the peptide chain termination codons UAG and UAA.</text>
</comment>
<comment type="subcellular location">
    <subcellularLocation>
        <location evidence="1">Cytoplasm</location>
    </subcellularLocation>
</comment>
<comment type="PTM">
    <text evidence="1">Methylated by PrmC. Methylation increases the termination efficiency of RF1.</text>
</comment>
<comment type="similarity">
    <text evidence="1">Belongs to the prokaryotic/mitochondrial release factor family.</text>
</comment>
<gene>
    <name evidence="1" type="primary">prfA</name>
    <name type="ordered locus">MGAS9429_Spy0980</name>
</gene>
<evidence type="ECO:0000255" key="1">
    <source>
        <dbReference type="HAMAP-Rule" id="MF_00093"/>
    </source>
</evidence>
<keyword id="KW-0963">Cytoplasm</keyword>
<keyword id="KW-0488">Methylation</keyword>
<keyword id="KW-0648">Protein biosynthesis</keyword>
<sequence length="359" mass="40600">MNIYDQLQAVEDRYEELGELLSDPDVVSDTKRFMELSREEANTRETVTAYREYKQVIQTISDAEEMIKDASGDPELEEMAKEELKESKAAKEEYEEKLKILLLPKDPNDDKNIILEIRGAAGGDEAALFAGDLLTMYQKYAETQGWRFEVMESSVNGVGGIKEVVAMVSGQSVYSKLKYESGAHRVQRVPVTESQGRVHTSTATVLVMPEVEEVEYDIDQKDLRVDIYHASGAGGQNVNKVATAVRMVHIPTGIKVEMQEERTQQKNRDKAMKIIRARVADHFAQIAQDEQDAERKSTVGTGDRSERIRTYNFPQNRVTDHRIGLTLQKLDTILSGKMDEVIDALVMYDQTKKLESLNN</sequence>
<feature type="chain" id="PRO_0000263365" description="Peptide chain release factor 1">
    <location>
        <begin position="1"/>
        <end position="359"/>
    </location>
</feature>
<feature type="modified residue" description="N5-methylglutamine" evidence="1">
    <location>
        <position position="236"/>
    </location>
</feature>
<organism>
    <name type="scientific">Streptococcus pyogenes serotype M12 (strain MGAS9429)</name>
    <dbReference type="NCBI Taxonomy" id="370551"/>
    <lineage>
        <taxon>Bacteria</taxon>
        <taxon>Bacillati</taxon>
        <taxon>Bacillota</taxon>
        <taxon>Bacilli</taxon>
        <taxon>Lactobacillales</taxon>
        <taxon>Streptococcaceae</taxon>
        <taxon>Streptococcus</taxon>
    </lineage>
</organism>
<accession>Q1JLQ2</accession>
<dbReference type="EMBL" id="CP000259">
    <property type="protein sequence ID" value="ABF32167.1"/>
    <property type="molecule type" value="Genomic_DNA"/>
</dbReference>
<dbReference type="RefSeq" id="WP_002989800.1">
    <property type="nucleotide sequence ID" value="NC_008021.1"/>
</dbReference>
<dbReference type="SMR" id="Q1JLQ2"/>
<dbReference type="KEGG" id="spk:MGAS9429_Spy0980"/>
<dbReference type="HOGENOM" id="CLU_036856_0_1_9"/>
<dbReference type="PHI-base" id="PHI:4652"/>
<dbReference type="Proteomes" id="UP000002433">
    <property type="component" value="Chromosome"/>
</dbReference>
<dbReference type="GO" id="GO:0005737">
    <property type="term" value="C:cytoplasm"/>
    <property type="evidence" value="ECO:0007669"/>
    <property type="project" value="UniProtKB-SubCell"/>
</dbReference>
<dbReference type="GO" id="GO:0016149">
    <property type="term" value="F:translation release factor activity, codon specific"/>
    <property type="evidence" value="ECO:0007669"/>
    <property type="project" value="UniProtKB-UniRule"/>
</dbReference>
<dbReference type="FunFam" id="3.30.160.20:FF:000027">
    <property type="entry name" value="Peptide chain release factor 1"/>
    <property type="match status" value="1"/>
</dbReference>
<dbReference type="FunFam" id="3.30.70.1660:FF:000002">
    <property type="entry name" value="Peptide chain release factor 1"/>
    <property type="match status" value="1"/>
</dbReference>
<dbReference type="FunFam" id="3.30.70.1660:FF:000004">
    <property type="entry name" value="Peptide chain release factor 1"/>
    <property type="match status" value="1"/>
</dbReference>
<dbReference type="Gene3D" id="3.30.160.20">
    <property type="match status" value="1"/>
</dbReference>
<dbReference type="Gene3D" id="3.30.70.1660">
    <property type="match status" value="2"/>
</dbReference>
<dbReference type="Gene3D" id="6.10.140.1950">
    <property type="match status" value="1"/>
</dbReference>
<dbReference type="HAMAP" id="MF_00093">
    <property type="entry name" value="Rel_fac_1"/>
    <property type="match status" value="1"/>
</dbReference>
<dbReference type="InterPro" id="IPR005139">
    <property type="entry name" value="PCRF"/>
</dbReference>
<dbReference type="InterPro" id="IPR000352">
    <property type="entry name" value="Pep_chain_release_fac_I"/>
</dbReference>
<dbReference type="InterPro" id="IPR045853">
    <property type="entry name" value="Pep_chain_release_fac_I_sf"/>
</dbReference>
<dbReference type="InterPro" id="IPR050057">
    <property type="entry name" value="Prokaryotic/Mito_RF"/>
</dbReference>
<dbReference type="InterPro" id="IPR004373">
    <property type="entry name" value="RF-1"/>
</dbReference>
<dbReference type="NCBIfam" id="TIGR00019">
    <property type="entry name" value="prfA"/>
    <property type="match status" value="1"/>
</dbReference>
<dbReference type="NCBIfam" id="NF001859">
    <property type="entry name" value="PRK00591.1"/>
    <property type="match status" value="1"/>
</dbReference>
<dbReference type="PANTHER" id="PTHR43804">
    <property type="entry name" value="LD18447P"/>
    <property type="match status" value="1"/>
</dbReference>
<dbReference type="PANTHER" id="PTHR43804:SF7">
    <property type="entry name" value="LD18447P"/>
    <property type="match status" value="1"/>
</dbReference>
<dbReference type="Pfam" id="PF03462">
    <property type="entry name" value="PCRF"/>
    <property type="match status" value="1"/>
</dbReference>
<dbReference type="Pfam" id="PF00472">
    <property type="entry name" value="RF-1"/>
    <property type="match status" value="1"/>
</dbReference>
<dbReference type="SMART" id="SM00937">
    <property type="entry name" value="PCRF"/>
    <property type="match status" value="1"/>
</dbReference>
<dbReference type="SUPFAM" id="SSF75620">
    <property type="entry name" value="Release factor"/>
    <property type="match status" value="1"/>
</dbReference>
<dbReference type="PROSITE" id="PS00745">
    <property type="entry name" value="RF_PROK_I"/>
    <property type="match status" value="1"/>
</dbReference>
<protein>
    <recommendedName>
        <fullName evidence="1">Peptide chain release factor 1</fullName>
        <shortName evidence="1">RF-1</shortName>
    </recommendedName>
</protein>
<name>RF1_STRPC</name>